<keyword id="KW-1003">Cell membrane</keyword>
<keyword id="KW-0472">Membrane</keyword>
<keyword id="KW-0812">Transmembrane</keyword>
<keyword id="KW-1133">Transmembrane helix</keyword>
<dbReference type="EMBL" id="CP000863">
    <property type="protein sequence ID" value="ACC58936.1"/>
    <property type="molecule type" value="Genomic_DNA"/>
</dbReference>
<dbReference type="RefSeq" id="WP_000490267.1">
    <property type="nucleotide sequence ID" value="NZ_CP031380.1"/>
</dbReference>
<dbReference type="KEGG" id="abc:ACICU_03627"/>
<dbReference type="HOGENOM" id="CLU_187346_2_0_6"/>
<dbReference type="Proteomes" id="UP000008839">
    <property type="component" value="Chromosome"/>
</dbReference>
<dbReference type="GO" id="GO:0005886">
    <property type="term" value="C:plasma membrane"/>
    <property type="evidence" value="ECO:0007669"/>
    <property type="project" value="UniProtKB-SubCell"/>
</dbReference>
<dbReference type="HAMAP" id="MF_01361">
    <property type="entry name" value="UPF0391"/>
    <property type="match status" value="1"/>
</dbReference>
<dbReference type="InterPro" id="IPR009760">
    <property type="entry name" value="DUF1328"/>
</dbReference>
<dbReference type="NCBIfam" id="NF010227">
    <property type="entry name" value="PRK13682.1-2"/>
    <property type="match status" value="1"/>
</dbReference>
<dbReference type="NCBIfam" id="NF010229">
    <property type="entry name" value="PRK13682.1-4"/>
    <property type="match status" value="1"/>
</dbReference>
<dbReference type="Pfam" id="PF07043">
    <property type="entry name" value="DUF1328"/>
    <property type="match status" value="1"/>
</dbReference>
<dbReference type="PIRSF" id="PIRSF036466">
    <property type="entry name" value="UCP036466"/>
    <property type="match status" value="1"/>
</dbReference>
<reference key="1">
    <citation type="journal article" date="2008" name="Antimicrob. Agents Chemother.">
        <title>Whole-genome pyrosequencing of an epidemic multidrug-resistant Acinetobacter baumannii strain belonging to the European clone II group.</title>
        <authorList>
            <person name="Iacono M."/>
            <person name="Villa L."/>
            <person name="Fortini D."/>
            <person name="Bordoni R."/>
            <person name="Imperi F."/>
            <person name="Bonnal R.J."/>
            <person name="Sicheritz-Ponten T."/>
            <person name="De Bellis G."/>
            <person name="Visca P."/>
            <person name="Cassone A."/>
            <person name="Carattoli A."/>
        </authorList>
    </citation>
    <scope>NUCLEOTIDE SEQUENCE [LARGE SCALE GENOMIC DNA]</scope>
    <source>
        <strain>ACICU</strain>
    </source>
</reference>
<comment type="subcellular location">
    <subcellularLocation>
        <location evidence="1">Cell membrane</location>
        <topology evidence="1">Multi-pass membrane protein</topology>
    </subcellularLocation>
</comment>
<comment type="similarity">
    <text evidence="1">Belongs to the UPF0391 family.</text>
</comment>
<name>Y3627_ACIBC</name>
<feature type="chain" id="PRO_1000143700" description="UPF0391 membrane protein ACICU_03627">
    <location>
        <begin position="1"/>
        <end position="52"/>
    </location>
</feature>
<feature type="transmembrane region" description="Helical" evidence="1">
    <location>
        <begin position="6"/>
        <end position="26"/>
    </location>
</feature>
<feature type="transmembrane region" description="Helical" evidence="1">
    <location>
        <begin position="30"/>
        <end position="50"/>
    </location>
</feature>
<sequence>MFRWAIIFAVIALIASLLGFGGVAGLSKDFAVILLVIAVILAVIGFISRGRT</sequence>
<gene>
    <name type="ordered locus">ACICU_03627</name>
</gene>
<protein>
    <recommendedName>
        <fullName evidence="1">UPF0391 membrane protein ACICU_03627</fullName>
    </recommendedName>
</protein>
<accession>B2I2E9</accession>
<proteinExistence type="inferred from homology"/>
<organism>
    <name type="scientific">Acinetobacter baumannii (strain ACICU)</name>
    <dbReference type="NCBI Taxonomy" id="405416"/>
    <lineage>
        <taxon>Bacteria</taxon>
        <taxon>Pseudomonadati</taxon>
        <taxon>Pseudomonadota</taxon>
        <taxon>Gammaproteobacteria</taxon>
        <taxon>Moraxellales</taxon>
        <taxon>Moraxellaceae</taxon>
        <taxon>Acinetobacter</taxon>
        <taxon>Acinetobacter calcoaceticus/baumannii complex</taxon>
    </lineage>
</organism>
<evidence type="ECO:0000255" key="1">
    <source>
        <dbReference type="HAMAP-Rule" id="MF_01361"/>
    </source>
</evidence>